<accession>Q928X8</accession>
<evidence type="ECO:0000255" key="1">
    <source>
        <dbReference type="HAMAP-Rule" id="MF_00984"/>
    </source>
</evidence>
<evidence type="ECO:0000256" key="2">
    <source>
        <dbReference type="SAM" id="MobiDB-lite"/>
    </source>
</evidence>
<keyword id="KW-0238">DNA-binding</keyword>
<comment type="subunit">
    <text evidence="1">Homotetramer.</text>
</comment>
<sequence>MMNRVVLVGRLTKDPELRYTPAGVAVATFTLAVNRPFKNGQGEQEADFIQCVVWRKPAENVANFLKKGSLAGVDGRVQTRNYEGNDGKRVYVTEIVAESVQFLESKQNGAGGSTSNNNQSETNYSNDNKTSSYRADRSQNGDSFANEGAPVDINPDDLPF</sequence>
<reference key="1">
    <citation type="journal article" date="2001" name="Science">
        <title>Comparative genomics of Listeria species.</title>
        <authorList>
            <person name="Glaser P."/>
            <person name="Frangeul L."/>
            <person name="Buchrieser C."/>
            <person name="Rusniok C."/>
            <person name="Amend A."/>
            <person name="Baquero F."/>
            <person name="Berche P."/>
            <person name="Bloecker H."/>
            <person name="Brandt P."/>
            <person name="Chakraborty T."/>
            <person name="Charbit A."/>
            <person name="Chetouani F."/>
            <person name="Couve E."/>
            <person name="de Daruvar A."/>
            <person name="Dehoux P."/>
            <person name="Domann E."/>
            <person name="Dominguez-Bernal G."/>
            <person name="Duchaud E."/>
            <person name="Durant L."/>
            <person name="Dussurget O."/>
            <person name="Entian K.-D."/>
            <person name="Fsihi H."/>
            <person name="Garcia-del Portillo F."/>
            <person name="Garrido P."/>
            <person name="Gautier L."/>
            <person name="Goebel W."/>
            <person name="Gomez-Lopez N."/>
            <person name="Hain T."/>
            <person name="Hauf J."/>
            <person name="Jackson D."/>
            <person name="Jones L.-M."/>
            <person name="Kaerst U."/>
            <person name="Kreft J."/>
            <person name="Kuhn M."/>
            <person name="Kunst F."/>
            <person name="Kurapkat G."/>
            <person name="Madueno E."/>
            <person name="Maitournam A."/>
            <person name="Mata Vicente J."/>
            <person name="Ng E."/>
            <person name="Nedjari H."/>
            <person name="Nordsiek G."/>
            <person name="Novella S."/>
            <person name="de Pablos B."/>
            <person name="Perez-Diaz J.-C."/>
            <person name="Purcell R."/>
            <person name="Remmel B."/>
            <person name="Rose M."/>
            <person name="Schlueter T."/>
            <person name="Simoes N."/>
            <person name="Tierrez A."/>
            <person name="Vazquez-Boland J.-A."/>
            <person name="Voss H."/>
            <person name="Wehland J."/>
            <person name="Cossart P."/>
        </authorList>
    </citation>
    <scope>NUCLEOTIDE SEQUENCE [LARGE SCALE GENOMIC DNA]</scope>
    <source>
        <strain>ATCC BAA-680 / CLIP 11262</strain>
    </source>
</reference>
<dbReference type="EMBL" id="AL596172">
    <property type="protein sequence ID" value="CAC97629.1"/>
    <property type="molecule type" value="Genomic_DNA"/>
</dbReference>
<dbReference type="PIR" id="AE1732">
    <property type="entry name" value="AE1732"/>
</dbReference>
<dbReference type="SMR" id="Q928X8"/>
<dbReference type="STRING" id="272626.gene:17566763"/>
<dbReference type="KEGG" id="lin:lin2402"/>
<dbReference type="eggNOG" id="COG0629">
    <property type="taxonomic scope" value="Bacteria"/>
</dbReference>
<dbReference type="HOGENOM" id="CLU_078758_6_2_9"/>
<dbReference type="OrthoDB" id="9809878at2"/>
<dbReference type="Proteomes" id="UP000002513">
    <property type="component" value="Chromosome"/>
</dbReference>
<dbReference type="GO" id="GO:0009295">
    <property type="term" value="C:nucleoid"/>
    <property type="evidence" value="ECO:0007669"/>
    <property type="project" value="TreeGrafter"/>
</dbReference>
<dbReference type="GO" id="GO:0003697">
    <property type="term" value="F:single-stranded DNA binding"/>
    <property type="evidence" value="ECO:0007669"/>
    <property type="project" value="UniProtKB-UniRule"/>
</dbReference>
<dbReference type="GO" id="GO:0006260">
    <property type="term" value="P:DNA replication"/>
    <property type="evidence" value="ECO:0007669"/>
    <property type="project" value="InterPro"/>
</dbReference>
<dbReference type="CDD" id="cd04496">
    <property type="entry name" value="SSB_OBF"/>
    <property type="match status" value="1"/>
</dbReference>
<dbReference type="FunFam" id="2.40.50.140:FF:000084">
    <property type="entry name" value="Single-stranded DNA-binding protein"/>
    <property type="match status" value="1"/>
</dbReference>
<dbReference type="Gene3D" id="2.40.50.140">
    <property type="entry name" value="Nucleic acid-binding proteins"/>
    <property type="match status" value="1"/>
</dbReference>
<dbReference type="HAMAP" id="MF_00984">
    <property type="entry name" value="SSB"/>
    <property type="match status" value="1"/>
</dbReference>
<dbReference type="InterPro" id="IPR012340">
    <property type="entry name" value="NA-bd_OB-fold"/>
</dbReference>
<dbReference type="InterPro" id="IPR000424">
    <property type="entry name" value="Primosome_PriB/ssb"/>
</dbReference>
<dbReference type="InterPro" id="IPR011344">
    <property type="entry name" value="ssDNA-bd"/>
</dbReference>
<dbReference type="NCBIfam" id="TIGR00621">
    <property type="entry name" value="ssb"/>
    <property type="match status" value="1"/>
</dbReference>
<dbReference type="PANTHER" id="PTHR10302">
    <property type="entry name" value="SINGLE-STRANDED DNA-BINDING PROTEIN"/>
    <property type="match status" value="1"/>
</dbReference>
<dbReference type="PANTHER" id="PTHR10302:SF27">
    <property type="entry name" value="SINGLE-STRANDED DNA-BINDING PROTEIN"/>
    <property type="match status" value="1"/>
</dbReference>
<dbReference type="Pfam" id="PF00436">
    <property type="entry name" value="SSB"/>
    <property type="match status" value="1"/>
</dbReference>
<dbReference type="PIRSF" id="PIRSF002070">
    <property type="entry name" value="SSB"/>
    <property type="match status" value="1"/>
</dbReference>
<dbReference type="SUPFAM" id="SSF50249">
    <property type="entry name" value="Nucleic acid-binding proteins"/>
    <property type="match status" value="1"/>
</dbReference>
<dbReference type="PROSITE" id="PS50935">
    <property type="entry name" value="SSB"/>
    <property type="match status" value="1"/>
</dbReference>
<proteinExistence type="inferred from homology"/>
<feature type="chain" id="PRO_0000096059" description="Single-stranded DNA-binding protein 3">
    <location>
        <begin position="1"/>
        <end position="160"/>
    </location>
</feature>
<feature type="domain" description="SSB" evidence="1">
    <location>
        <begin position="2"/>
        <end position="104"/>
    </location>
</feature>
<feature type="region of interest" description="Disordered" evidence="2">
    <location>
        <begin position="106"/>
        <end position="160"/>
    </location>
</feature>
<feature type="compositionally biased region" description="Polar residues" evidence="2">
    <location>
        <begin position="106"/>
        <end position="133"/>
    </location>
</feature>
<gene>
    <name type="primary">ssb3</name>
    <name type="ordered locus">lin2402</name>
</gene>
<protein>
    <recommendedName>
        <fullName evidence="1">Single-stranded DNA-binding protein 3</fullName>
        <shortName evidence="1">SSB 3</shortName>
    </recommendedName>
</protein>
<name>SSB3_LISIN</name>
<organism>
    <name type="scientific">Listeria innocua serovar 6a (strain ATCC BAA-680 / CLIP 11262)</name>
    <dbReference type="NCBI Taxonomy" id="272626"/>
    <lineage>
        <taxon>Bacteria</taxon>
        <taxon>Bacillati</taxon>
        <taxon>Bacillota</taxon>
        <taxon>Bacilli</taxon>
        <taxon>Bacillales</taxon>
        <taxon>Listeriaceae</taxon>
        <taxon>Listeria</taxon>
    </lineage>
</organism>